<organism>
    <name type="scientific">Deinagkistrodon acutus</name>
    <name type="common">Hundred-pace snake</name>
    <name type="synonym">Agkistrodon acutus</name>
    <dbReference type="NCBI Taxonomy" id="36307"/>
    <lineage>
        <taxon>Eukaryota</taxon>
        <taxon>Metazoa</taxon>
        <taxon>Chordata</taxon>
        <taxon>Craniata</taxon>
        <taxon>Vertebrata</taxon>
        <taxon>Euteleostomi</taxon>
        <taxon>Lepidosauria</taxon>
        <taxon>Squamata</taxon>
        <taxon>Bifurcata</taxon>
        <taxon>Unidentata</taxon>
        <taxon>Episquamata</taxon>
        <taxon>Toxicofera</taxon>
        <taxon>Serpentes</taxon>
        <taxon>Colubroidea</taxon>
        <taxon>Viperidae</taxon>
        <taxon>Crotalinae</taxon>
        <taxon>Deinagkistrodon</taxon>
    </lineage>
</organism>
<name>VM3AH_DEIAC</name>
<evidence type="ECO:0000250" key="1"/>
<evidence type="ECO:0000250" key="2">
    <source>
        <dbReference type="UniProtKB" id="O93523"/>
    </source>
</evidence>
<evidence type="ECO:0000250" key="3">
    <source>
        <dbReference type="UniProtKB" id="Q9PW35"/>
    </source>
</evidence>
<evidence type="ECO:0000255" key="4"/>
<evidence type="ECO:0000255" key="5">
    <source>
        <dbReference type="PROSITE-ProRule" id="PRU00068"/>
    </source>
</evidence>
<evidence type="ECO:0000255" key="6">
    <source>
        <dbReference type="PROSITE-ProRule" id="PRU00276"/>
    </source>
</evidence>
<evidence type="ECO:0000255" key="7">
    <source>
        <dbReference type="PROSITE-ProRule" id="PRU10095"/>
    </source>
</evidence>
<evidence type="ECO:0000269" key="8">
    <source>
    </source>
</evidence>
<evidence type="ECO:0000269" key="9">
    <source>
    </source>
</evidence>
<evidence type="ECO:0000269" key="10">
    <source>
    </source>
</evidence>
<evidence type="ECO:0000305" key="11"/>
<evidence type="ECO:0000305" key="12">
    <source>
    </source>
</evidence>
<evidence type="ECO:0000312" key="13">
    <source>
        <dbReference type="EMBL" id="AAD27891.1"/>
    </source>
</evidence>
<reference key="1">
    <citation type="journal article" date="2005" name="Biochimie">
        <title>Primary structure and antiplatelet mechanism of a snake venom metalloproteinase, acurhagin, from Agkistrodon acutus venom.</title>
        <authorList>
            <person name="Wang W.J."/>
            <person name="Shih C.H."/>
            <person name="Huang T.F."/>
        </authorList>
    </citation>
    <scope>NUCLEOTIDE SEQUENCE [MRNA]</scope>
    <scope>PARTIAL PROTEIN SEQUENCE</scope>
    <scope>FUNCTION</scope>
    <scope>ACTIVITY REGULATION</scope>
    <scope>SUBUNIT</scope>
    <source>
        <tissue>Venom gland</tissue>
    </source>
</reference>
<reference key="2">
    <citation type="submission" date="1999-04" db="EMBL/GenBank/DDBJ databases">
        <title>Purification and molecular cloning of acutin, a disintegrin-like/cysteine-rich two-domain protein which is the proteolytic product of a large hemorrhagic metalloproteinase (acutolysin e) from Agkistrodon acutus.</title>
        <authorList>
            <person name="Liu Q.D."/>
            <person name="Qian Y.W."/>
            <person name="Xu W.H."/>
            <person name="Liu J."/>
        </authorList>
    </citation>
    <scope>NUCLEOTIDE SEQUENCE [MRNA]</scope>
    <source>
        <tissue evidence="13">Venom gland</tissue>
    </source>
</reference>
<reference key="3">
    <citation type="submission" date="2009-06" db="EMBL/GenBank/DDBJ databases">
        <title>Molecular cloning of acutolysin e2, a P-III type hemorrhagic metalloproteinase from Agkistrodon acutus.</title>
        <authorList>
            <person name="Gao Y.X."/>
            <person name="Zhu Z.Q."/>
            <person name="Teng M.K."/>
        </authorList>
    </citation>
    <scope>NUCLEOTIDE SEQUENCE [MRNA] OF 1-584</scope>
</reference>
<reference key="4">
    <citation type="journal article" date="2002" name="Thromb. Haemost.">
        <title>Purification and characterization of a novel metalloproteinase, acurhagin, from Agkistrodon acutus venom.</title>
        <authorList>
            <person name="Wang W.J."/>
            <person name="Huang T.F."/>
        </authorList>
    </citation>
    <scope>PARTIAL PROTEIN SEQUENCE</scope>
    <scope>FUNCTION</scope>
    <scope>ACTIVITY REGULATION</scope>
    <scope>SUBUNIT</scope>
    <scope>MASS SPECTROMETRY</scope>
    <source>
        <tissue>Venom</tissue>
    </source>
</reference>
<reference key="5">
    <citation type="journal article" date="2008" name="Biochimie">
        <title>P-III hemorrhagic metalloproteinases from Russell's viper venom: cloning, characterization, phylogenetic and functional site analyses.</title>
        <authorList>
            <person name="Chen H.-S."/>
            <person name="Tsai H.-Y."/>
            <person name="Wang Y.-M."/>
            <person name="Tsai I.-H."/>
        </authorList>
    </citation>
    <scope>BIOPHYSICOCHEMICAL PROPERTIES</scope>
    <source>
        <tissue>Venom</tissue>
    </source>
</reference>
<sequence>MIQVLLVTICLAAFPYQGSSIILESGDVNDYEVVYPRKVTALPKGAVQQKYEDAMQYEFKVNGEPVVLHLEKNKHLFSKDYSETHYSPDGREITINPPVEDHCYYHGRIENDGDSTASISACNGLKGNFKLQGETYLIEPMKLSDSEAHAVFKYENVEKEDEAPKMCGVTQKWKSYEPIKKISQLNLIPEQQIYDPFKYVETVVVVDKAMVTKYNGDLDKIKTKMYEAANNMNEMYRYMFFRVVMVGLIIWTEEDKITVKPDVDYTLNAFAEWRKTYLLAEKKHDNAQLITGIDFRGSIIGYAYIGSMCHPKRSVGIIQDYSPINLVLAVIMAHEMGHNLGIHHDDGYCYCGGYPCIMGPSISPEPSKFFSNCSYIQCWDFIMNHNPECIDNEPLGTDIISPPLCGNELLEVGEECDCGTPENCQNECCDAATCKLKSGSQCGHGDCCEQCKFRTSGTECRASMSECDPAEHCTGQSSECPADVFHKNGEPCLDNYGYCYNGNCPIMYHQCYALFGADIYEAEDSCFESNKKGNYYGYCRKENGKKIPCASEDVKCGRLYCKDDSPGQNNPCKMFYSNDDEHKGMVLPGTKCADGKVCSNGHCVDVTTAY</sequence>
<feature type="signal peptide" evidence="4">
    <location>
        <begin position="1"/>
        <end position="20"/>
    </location>
</feature>
<feature type="propeptide" id="PRO_0000330010" evidence="1">
    <location>
        <begin position="21"/>
        <end position="191"/>
    </location>
</feature>
<feature type="chain" id="PRO_0000235853" description="Zinc metalloproteinase-disintegrin-like acurhagin">
    <location>
        <begin position="192"/>
        <end position="610"/>
    </location>
</feature>
<feature type="domain" description="Peptidase M12B" evidence="6">
    <location>
        <begin position="198"/>
        <end position="394"/>
    </location>
</feature>
<feature type="domain" description="Disintegrin" evidence="5">
    <location>
        <begin position="402"/>
        <end position="488"/>
    </location>
</feature>
<feature type="short sequence motif" description="D/ECD-tripeptide">
    <location>
        <begin position="466"/>
        <end position="468"/>
    </location>
</feature>
<feature type="active site" evidence="6 7">
    <location>
        <position position="335"/>
    </location>
</feature>
<feature type="binding site" evidence="1">
    <location>
        <position position="201"/>
    </location>
    <ligand>
        <name>Ca(2+)</name>
        <dbReference type="ChEBI" id="CHEBI:29108"/>
        <label>1</label>
    </ligand>
</feature>
<feature type="binding site" evidence="1">
    <location>
        <position position="285"/>
    </location>
    <ligand>
        <name>Ca(2+)</name>
        <dbReference type="ChEBI" id="CHEBI:29108"/>
        <label>1</label>
    </ligand>
</feature>
<feature type="binding site" evidence="1">
    <location>
        <position position="334"/>
    </location>
    <ligand>
        <name>Zn(2+)</name>
        <dbReference type="ChEBI" id="CHEBI:29105"/>
        <note>catalytic</note>
    </ligand>
</feature>
<feature type="binding site" evidence="1">
    <location>
        <position position="338"/>
    </location>
    <ligand>
        <name>Zn(2+)</name>
        <dbReference type="ChEBI" id="CHEBI:29105"/>
        <note>catalytic</note>
    </ligand>
</feature>
<feature type="binding site" evidence="1">
    <location>
        <position position="344"/>
    </location>
    <ligand>
        <name>Zn(2+)</name>
        <dbReference type="ChEBI" id="CHEBI:29105"/>
        <note>catalytic</note>
    </ligand>
</feature>
<feature type="binding site" evidence="1">
    <location>
        <position position="389"/>
    </location>
    <ligand>
        <name>Ca(2+)</name>
        <dbReference type="ChEBI" id="CHEBI:29108"/>
        <label>1</label>
    </ligand>
</feature>
<feature type="binding site" evidence="1">
    <location>
        <position position="392"/>
    </location>
    <ligand>
        <name>Ca(2+)</name>
        <dbReference type="ChEBI" id="CHEBI:29108"/>
        <label>1</label>
    </ligand>
</feature>
<feature type="binding site" evidence="1">
    <location>
        <position position="407"/>
    </location>
    <ligand>
        <name>Ca(2+)</name>
        <dbReference type="ChEBI" id="CHEBI:29108"/>
        <label>2</label>
    </ligand>
</feature>
<feature type="binding site" evidence="1">
    <location>
        <position position="409"/>
    </location>
    <ligand>
        <name>Ca(2+)</name>
        <dbReference type="ChEBI" id="CHEBI:29108"/>
        <label>2</label>
    </ligand>
</feature>
<feature type="binding site" evidence="1">
    <location>
        <position position="411"/>
    </location>
    <ligand>
        <name>Ca(2+)</name>
        <dbReference type="ChEBI" id="CHEBI:29108"/>
        <label>2</label>
    </ligand>
</feature>
<feature type="binding site" evidence="1">
    <location>
        <position position="414"/>
    </location>
    <ligand>
        <name>Ca(2+)</name>
        <dbReference type="ChEBI" id="CHEBI:29108"/>
        <label>2</label>
    </ligand>
</feature>
<feature type="binding site" evidence="1">
    <location>
        <position position="417"/>
    </location>
    <ligand>
        <name>Ca(2+)</name>
        <dbReference type="ChEBI" id="CHEBI:29108"/>
        <label>2</label>
    </ligand>
</feature>
<feature type="binding site" evidence="1">
    <location>
        <position position="468"/>
    </location>
    <ligand>
        <name>Ca(2+)</name>
        <dbReference type="ChEBI" id="CHEBI:29108"/>
        <label>3</label>
    </ligand>
</feature>
<feature type="binding site" evidence="1">
    <location>
        <position position="469"/>
    </location>
    <ligand>
        <name>Ca(2+)</name>
        <dbReference type="ChEBI" id="CHEBI:29108"/>
        <label>3</label>
    </ligand>
</feature>
<feature type="binding site" evidence="1">
    <location>
        <position position="471"/>
    </location>
    <ligand>
        <name>Ca(2+)</name>
        <dbReference type="ChEBI" id="CHEBI:29108"/>
        <label>3</label>
    </ligand>
</feature>
<feature type="binding site" evidence="1">
    <location>
        <position position="483"/>
    </location>
    <ligand>
        <name>Ca(2+)</name>
        <dbReference type="ChEBI" id="CHEBI:29108"/>
        <label>3</label>
    </ligand>
</feature>
<feature type="binding site" evidence="1">
    <location>
        <position position="484"/>
    </location>
    <ligand>
        <name>Ca(2+)</name>
        <dbReference type="ChEBI" id="CHEBI:29108"/>
        <label>3</label>
    </ligand>
</feature>
<feature type="modified residue" description="Pyrrolidone carboxylic acid" evidence="1">
    <location>
        <position position="192"/>
    </location>
</feature>
<feature type="glycosylation site" description="N-linked (GlcNAc...) asparagine" evidence="4">
    <location>
        <position position="372"/>
    </location>
</feature>
<feature type="disulfide bond" evidence="2">
    <location>
        <begin position="309"/>
        <end position="389"/>
    </location>
</feature>
<feature type="disulfide bond" evidence="2">
    <location>
        <begin position="349"/>
        <end position="373"/>
    </location>
</feature>
<feature type="disulfide bond" evidence="2">
    <location>
        <begin position="351"/>
        <end position="356"/>
    </location>
</feature>
<feature type="disulfide bond" evidence="2">
    <location>
        <begin position="405"/>
        <end position="434"/>
    </location>
</feature>
<feature type="disulfide bond" evidence="2">
    <location>
        <begin position="416"/>
        <end position="429"/>
    </location>
</feature>
<feature type="disulfide bond" evidence="2">
    <location>
        <begin position="418"/>
        <end position="424"/>
    </location>
</feature>
<feature type="disulfide bond" evidence="2">
    <location>
        <begin position="428"/>
        <end position="451"/>
    </location>
</feature>
<feature type="disulfide bond" evidence="2">
    <location>
        <begin position="442"/>
        <end position="448"/>
    </location>
</feature>
<feature type="disulfide bond" evidence="2">
    <location>
        <begin position="447"/>
        <end position="473"/>
    </location>
</feature>
<feature type="disulfide bond" evidence="2">
    <location>
        <begin position="460"/>
        <end position="480"/>
    </location>
</feature>
<feature type="disulfide bond" evidence="2">
    <location>
        <begin position="467"/>
        <end position="499"/>
    </location>
</feature>
<feature type="disulfide bond" evidence="2">
    <location>
        <begin position="492"/>
        <end position="504"/>
    </location>
</feature>
<feature type="disulfide bond" evidence="2">
    <location>
        <begin position="511"/>
        <end position="561"/>
    </location>
</feature>
<feature type="disulfide bond" evidence="2">
    <location>
        <begin position="526"/>
        <end position="572"/>
    </location>
</feature>
<feature type="disulfide bond" evidence="2">
    <location>
        <begin position="539"/>
        <end position="549"/>
    </location>
</feature>
<feature type="disulfide bond" evidence="2">
    <location>
        <begin position="556"/>
        <end position="598"/>
    </location>
</feature>
<feature type="disulfide bond" evidence="2">
    <location>
        <begin position="592"/>
        <end position="603"/>
    </location>
</feature>
<feature type="sequence conflict" description="In Ref. 2; AAD27891 and 3; ACT33415." evidence="11" ref="2 3">
    <location>
        <position position="160"/>
    </location>
</feature>
<feature type="sequence conflict" description="In Ref. 3; ACT33415." evidence="11" ref="3">
    <original>I</original>
    <variation>V</variation>
    <location>
        <position position="182"/>
    </location>
</feature>
<feature type="sequence conflict" description="In Ref. 3; ACT33415." evidence="11" ref="3">
    <original>V</original>
    <variation>F</variation>
    <location>
        <position position="204"/>
    </location>
</feature>
<feature type="sequence conflict" description="In Ref. 2; AAD27891." evidence="11" ref="2">
    <original>K</original>
    <variation>I</variation>
    <location>
        <position position="222"/>
    </location>
</feature>
<feature type="sequence conflict" description="In Ref. 3; ACT33415." evidence="11" ref="3">
    <original>E</original>
    <variation>P</variation>
    <location>
        <position position="427"/>
    </location>
</feature>
<feature type="sequence conflict" description="In Ref. 2; AAD27891 and 3; ACT33415." evidence="11" ref="2 3">
    <original>D</original>
    <variation>K</variation>
    <location>
        <position position="446"/>
    </location>
</feature>
<feature type="sequence conflict" description="In Ref. 2; AAD27891." evidence="11" ref="2">
    <original>DI</original>
    <variation>EV</variation>
    <location>
        <begin position="518"/>
        <end position="519"/>
    </location>
</feature>
<protein>
    <recommendedName>
        <fullName>Zinc metalloproteinase-disintegrin-like acurhagin</fullName>
        <shortName>Acur</shortName>
        <ecNumber>3.4.24.-</ecNumber>
    </recommendedName>
    <alternativeName>
        <fullName>Acutolysin e2</fullName>
    </alternativeName>
    <alternativeName>
        <fullName>Snake venom metalloproteinase</fullName>
        <shortName>SVMP</shortName>
    </alternativeName>
    <alternativeName>
        <fullName>Zinc metalloproteinase-disintegrin-like acutolysin-E</fullName>
    </alternativeName>
</protein>
<proteinExistence type="evidence at protein level"/>
<comment type="function">
    <text evidence="8 9">Snake venom zinc metalloprotease that causes hemorrhage and dose-dependently inhibits platelet aggregation triggered by collagen. This inhibition is due to its binding to glycoprotein VI (GP6) and collagen. The binding to GP6 results in inhibition of the signaling pathway (decrease of tyrosine phosphorylation of signaling proteins such as Syk, LAT, PI3-K and PLCgamma2). Preferentially cleaves alpha chain (FGA) of fibrinogen, followed by beta chain (FGB). Also degrades the extracellular matrix protein fibronectin (FN1), and cleaves collagen and von Willebrand factor (VWF).</text>
</comment>
<comment type="cofactor">
    <cofactor evidence="3">
        <name>Zn(2+)</name>
        <dbReference type="ChEBI" id="CHEBI:29105"/>
    </cofactor>
    <text evidence="3">Binds 1 zinc ion per subunit.</text>
</comment>
<comment type="activity regulation">
    <text evidence="8 9">The proteinase activity is slightly enhanced by Ca(2+) and Mg(2+), but is completely inhibited by Zn(2+). Is completely inhibited by phenanthroline and EDTA. Not inhibited by PMSF.</text>
</comment>
<comment type="biophysicochemical properties">
    <kinetics>
        <KM evidence="10">9.4 uM for NFF-2 (fluorogenic substrates with cleavage at Ala-Nva)</KM>
    </kinetics>
</comment>
<comment type="subunit">
    <text evidence="8 9">Monomer.</text>
</comment>
<comment type="subcellular location">
    <subcellularLocation>
        <location>Secreted</location>
    </subcellularLocation>
</comment>
<comment type="tissue specificity">
    <text>Expressed by the venom gland.</text>
</comment>
<comment type="PTM">
    <text>N-glycosylated.</text>
</comment>
<comment type="mass spectrometry"/>
<comment type="miscellaneous">
    <text evidence="12">Negative results: does not degrade gamma chain of fibrinogen (PubMed:12008947). Does not inhibit collagen-induced platelet aggregation by activating alpha-2/beta-1 integrin (ITGA2/ITGB1), or by inhibiting alpha-IIb/beta-3 (ITGA2B/ITGB3) interaction with fibrinogen. Does not cleave platelet membrane glycoproteins, including glycoprotein VI (GP6), GPIbalpha (GP1BA) and beta-3 integrin (ITGB3) (PubMed:12008947).</text>
</comment>
<comment type="similarity">
    <text evidence="11">Belongs to the venom metalloproteinase (M12B) family. P-III subfamily. P-IIIa sub-subfamily.</text>
</comment>
<accession>Q9W6M5</accession>
<accession>C7E3Q3</accession>
<accession>Q6Q274</accession>
<dbReference type="EC" id="3.4.24.-"/>
<dbReference type="EMBL" id="AY566610">
    <property type="protein sequence ID" value="AAS57937.1"/>
    <property type="molecule type" value="mRNA"/>
</dbReference>
<dbReference type="EMBL" id="AF141379">
    <property type="protein sequence ID" value="AAD27891.1"/>
    <property type="molecule type" value="mRNA"/>
</dbReference>
<dbReference type="EMBL" id="GQ245980">
    <property type="protein sequence ID" value="ACT33415.1"/>
    <property type="molecule type" value="mRNA"/>
</dbReference>
<dbReference type="SMR" id="Q9W6M5"/>
<dbReference type="MEROPS" id="M12.334"/>
<dbReference type="GO" id="GO:0005576">
    <property type="term" value="C:extracellular region"/>
    <property type="evidence" value="ECO:0000250"/>
    <property type="project" value="UniProtKB"/>
</dbReference>
<dbReference type="GO" id="GO:0005886">
    <property type="term" value="C:plasma membrane"/>
    <property type="evidence" value="ECO:0007669"/>
    <property type="project" value="TreeGrafter"/>
</dbReference>
<dbReference type="GO" id="GO:0005509">
    <property type="term" value="F:calcium ion binding"/>
    <property type="evidence" value="ECO:0000250"/>
    <property type="project" value="UniProtKB"/>
</dbReference>
<dbReference type="GO" id="GO:0004222">
    <property type="term" value="F:metalloendopeptidase activity"/>
    <property type="evidence" value="ECO:0007669"/>
    <property type="project" value="InterPro"/>
</dbReference>
<dbReference type="GO" id="GO:0090729">
    <property type="term" value="F:toxin activity"/>
    <property type="evidence" value="ECO:0007669"/>
    <property type="project" value="UniProtKB-KW"/>
</dbReference>
<dbReference type="GO" id="GO:0008270">
    <property type="term" value="F:zinc ion binding"/>
    <property type="evidence" value="ECO:0000250"/>
    <property type="project" value="UniProtKB"/>
</dbReference>
<dbReference type="GO" id="GO:0006508">
    <property type="term" value="P:proteolysis"/>
    <property type="evidence" value="ECO:0007669"/>
    <property type="project" value="UniProtKB-KW"/>
</dbReference>
<dbReference type="CDD" id="cd04269">
    <property type="entry name" value="ZnMc_adamalysin_II_like"/>
    <property type="match status" value="1"/>
</dbReference>
<dbReference type="FunFam" id="3.40.390.10:FF:000002">
    <property type="entry name" value="Disintegrin and metalloproteinase domain-containing protein 22"/>
    <property type="match status" value="1"/>
</dbReference>
<dbReference type="FunFam" id="4.10.70.10:FF:000001">
    <property type="entry name" value="Disintegrin and metalloproteinase domain-containing protein 22"/>
    <property type="match status" value="1"/>
</dbReference>
<dbReference type="Gene3D" id="3.40.390.10">
    <property type="entry name" value="Collagenase (Catalytic Domain)"/>
    <property type="match status" value="1"/>
</dbReference>
<dbReference type="Gene3D" id="4.10.70.10">
    <property type="entry name" value="Disintegrin domain"/>
    <property type="match status" value="1"/>
</dbReference>
<dbReference type="InterPro" id="IPR006586">
    <property type="entry name" value="ADAM_Cys-rich"/>
</dbReference>
<dbReference type="InterPro" id="IPR018358">
    <property type="entry name" value="Disintegrin_CS"/>
</dbReference>
<dbReference type="InterPro" id="IPR001762">
    <property type="entry name" value="Disintegrin_dom"/>
</dbReference>
<dbReference type="InterPro" id="IPR036436">
    <property type="entry name" value="Disintegrin_dom_sf"/>
</dbReference>
<dbReference type="InterPro" id="IPR024079">
    <property type="entry name" value="MetalloPept_cat_dom_sf"/>
</dbReference>
<dbReference type="InterPro" id="IPR001590">
    <property type="entry name" value="Peptidase_M12B"/>
</dbReference>
<dbReference type="InterPro" id="IPR002870">
    <property type="entry name" value="Peptidase_M12B_N"/>
</dbReference>
<dbReference type="InterPro" id="IPR034027">
    <property type="entry name" value="Reprolysin_adamalysin"/>
</dbReference>
<dbReference type="PANTHER" id="PTHR11905">
    <property type="entry name" value="ADAM A DISINTEGRIN AND METALLOPROTEASE DOMAIN"/>
    <property type="match status" value="1"/>
</dbReference>
<dbReference type="PANTHER" id="PTHR11905:SF32">
    <property type="entry name" value="DISINTEGRIN AND METALLOPROTEINASE DOMAIN-CONTAINING PROTEIN 28"/>
    <property type="match status" value="1"/>
</dbReference>
<dbReference type="Pfam" id="PF08516">
    <property type="entry name" value="ADAM_CR"/>
    <property type="match status" value="1"/>
</dbReference>
<dbReference type="Pfam" id="PF00200">
    <property type="entry name" value="Disintegrin"/>
    <property type="match status" value="1"/>
</dbReference>
<dbReference type="Pfam" id="PF01562">
    <property type="entry name" value="Pep_M12B_propep"/>
    <property type="match status" value="1"/>
</dbReference>
<dbReference type="Pfam" id="PF01421">
    <property type="entry name" value="Reprolysin"/>
    <property type="match status" value="1"/>
</dbReference>
<dbReference type="PRINTS" id="PR00289">
    <property type="entry name" value="DISINTEGRIN"/>
</dbReference>
<dbReference type="SMART" id="SM00608">
    <property type="entry name" value="ACR"/>
    <property type="match status" value="1"/>
</dbReference>
<dbReference type="SMART" id="SM00050">
    <property type="entry name" value="DISIN"/>
    <property type="match status" value="1"/>
</dbReference>
<dbReference type="SUPFAM" id="SSF57552">
    <property type="entry name" value="Blood coagulation inhibitor (disintegrin)"/>
    <property type="match status" value="1"/>
</dbReference>
<dbReference type="SUPFAM" id="SSF55486">
    <property type="entry name" value="Metalloproteases ('zincins'), catalytic domain"/>
    <property type="match status" value="1"/>
</dbReference>
<dbReference type="PROSITE" id="PS50215">
    <property type="entry name" value="ADAM_MEPRO"/>
    <property type="match status" value="1"/>
</dbReference>
<dbReference type="PROSITE" id="PS00427">
    <property type="entry name" value="DISINTEGRIN_1"/>
    <property type="match status" value="1"/>
</dbReference>
<dbReference type="PROSITE" id="PS50214">
    <property type="entry name" value="DISINTEGRIN_2"/>
    <property type="match status" value="1"/>
</dbReference>
<dbReference type="PROSITE" id="PS00142">
    <property type="entry name" value="ZINC_PROTEASE"/>
    <property type="match status" value="1"/>
</dbReference>
<keyword id="KW-0106">Calcium</keyword>
<keyword id="KW-0903">Direct protein sequencing</keyword>
<keyword id="KW-1015">Disulfide bond</keyword>
<keyword id="KW-0325">Glycoprotein</keyword>
<keyword id="KW-1200">Hemorrhagic toxin</keyword>
<keyword id="KW-1199">Hemostasis impairing toxin</keyword>
<keyword id="KW-0378">Hydrolase</keyword>
<keyword id="KW-0479">Metal-binding</keyword>
<keyword id="KW-0482">Metalloprotease</keyword>
<keyword id="KW-1201">Platelet aggregation inhibiting toxin</keyword>
<keyword id="KW-0645">Protease</keyword>
<keyword id="KW-0873">Pyrrolidone carboxylic acid</keyword>
<keyword id="KW-0964">Secreted</keyword>
<keyword id="KW-0732">Signal</keyword>
<keyword id="KW-0800">Toxin</keyword>
<keyword id="KW-0862">Zinc</keyword>
<keyword id="KW-0865">Zymogen</keyword>